<feature type="chain" id="PRO_0000056200" description="E3 ubiquitin-protein ligase TRIM4">
    <location>
        <begin position="1"/>
        <end position="500"/>
    </location>
</feature>
<feature type="domain" description="B30.2/SPRY" evidence="4">
    <location>
        <begin position="288"/>
        <end position="500"/>
    </location>
</feature>
<feature type="zinc finger region" description="RING-type" evidence="3">
    <location>
        <begin position="12"/>
        <end position="53"/>
    </location>
</feature>
<feature type="zinc finger region" description="B box-type" evidence="2">
    <location>
        <begin position="82"/>
        <end position="123"/>
    </location>
</feature>
<feature type="coiled-coil region" evidence="1">
    <location>
        <begin position="212"/>
        <end position="253"/>
    </location>
</feature>
<feature type="binding site" evidence="2">
    <location>
        <position position="87"/>
    </location>
    <ligand>
        <name>Zn(2+)</name>
        <dbReference type="ChEBI" id="CHEBI:29105"/>
    </ligand>
</feature>
<feature type="binding site" evidence="2">
    <location>
        <position position="90"/>
    </location>
    <ligand>
        <name>Zn(2+)</name>
        <dbReference type="ChEBI" id="CHEBI:29105"/>
    </ligand>
</feature>
<feature type="binding site" evidence="2">
    <location>
        <position position="109"/>
    </location>
    <ligand>
        <name>Zn(2+)</name>
        <dbReference type="ChEBI" id="CHEBI:29105"/>
    </ligand>
</feature>
<feature type="binding site" evidence="2">
    <location>
        <position position="115"/>
    </location>
    <ligand>
        <name>Zn(2+)</name>
        <dbReference type="ChEBI" id="CHEBI:29105"/>
    </ligand>
</feature>
<feature type="splice variant" id="VSP_010197" description="In isoform Beta and isoform Gamma." evidence="7 8">
    <location>
        <begin position="132"/>
        <end position="157"/>
    </location>
</feature>
<feature type="splice variant" id="VSP_010198" description="In isoform Gamma." evidence="8">
    <original>VAVNLAEDTAHPKL</original>
    <variation>ATKIKTQKQNRHNM</variation>
    <location>
        <begin position="307"/>
        <end position="320"/>
    </location>
</feature>
<feature type="splice variant" id="VSP_010199" description="In isoform Gamma." evidence="8">
    <location>
        <begin position="321"/>
        <end position="500"/>
    </location>
</feature>
<feature type="sequence variant" id="VAR_046715" description="In dbSNP:rs35432946.">
    <original>P</original>
    <variation>S</variation>
    <location>
        <position position="367"/>
    </location>
</feature>
<feature type="sequence variant" id="VAR_046716" description="In dbSNP:rs33998596.">
    <original>S</original>
    <variation>C</variation>
    <location>
        <position position="474"/>
    </location>
</feature>
<feature type="mutagenesis site" description="Abolishes ligase activity." evidence="6">
    <original>C</original>
    <variation>S</variation>
    <location>
        <position position="27"/>
    </location>
</feature>
<feature type="sequence conflict" description="In Ref. 1; AAG53477." evidence="9" ref="1">
    <original>F</original>
    <variation>S</variation>
    <location>
        <position position="154"/>
    </location>
</feature>
<dbReference type="EC" id="2.3.2.27"/>
<dbReference type="EMBL" id="AF220023">
    <property type="protein sequence ID" value="AAG53477.1"/>
    <property type="molecule type" value="mRNA"/>
</dbReference>
<dbReference type="EMBL" id="AF220024">
    <property type="protein sequence ID" value="AAG53478.1"/>
    <property type="molecule type" value="mRNA"/>
</dbReference>
<dbReference type="EMBL" id="AC011904">
    <property type="protein sequence ID" value="AAS07396.1"/>
    <property type="molecule type" value="Genomic_DNA"/>
</dbReference>
<dbReference type="EMBL" id="AC011904">
    <property type="protein sequence ID" value="AAS07398.1"/>
    <property type="molecule type" value="Genomic_DNA"/>
</dbReference>
<dbReference type="EMBL" id="AC011904">
    <property type="protein sequence ID" value="AAS07397.1"/>
    <property type="molecule type" value="Genomic_DNA"/>
</dbReference>
<dbReference type="EMBL" id="CH236956">
    <property type="protein sequence ID" value="EAL23864.1"/>
    <property type="molecule type" value="Genomic_DNA"/>
</dbReference>
<dbReference type="EMBL" id="CH471091">
    <property type="protein sequence ID" value="EAW76625.1"/>
    <property type="molecule type" value="Genomic_DNA"/>
</dbReference>
<dbReference type="EMBL" id="CH471091">
    <property type="protein sequence ID" value="EAW76626.1"/>
    <property type="molecule type" value="Genomic_DNA"/>
</dbReference>
<dbReference type="EMBL" id="CH236956">
    <property type="protein sequence ID" value="EAL23865.1"/>
    <property type="molecule type" value="Genomic_DNA"/>
</dbReference>
<dbReference type="EMBL" id="BC011763">
    <property type="protein sequence ID" value="AAH11763.1"/>
    <property type="molecule type" value="mRNA"/>
</dbReference>
<dbReference type="EMBL" id="BC025949">
    <property type="protein sequence ID" value="AAH25949.1"/>
    <property type="molecule type" value="mRNA"/>
</dbReference>
<dbReference type="CCDS" id="CCDS5678.1">
    <molecule id="Q9C037-2"/>
</dbReference>
<dbReference type="CCDS" id="CCDS5679.1">
    <molecule id="Q9C037-1"/>
</dbReference>
<dbReference type="RefSeq" id="NP_148977.2">
    <molecule id="Q9C037-1"/>
    <property type="nucleotide sequence ID" value="NM_033017.4"/>
</dbReference>
<dbReference type="RefSeq" id="NP_149082.1">
    <molecule id="Q9C037-2"/>
    <property type="nucleotide sequence ID" value="NM_033091.3"/>
</dbReference>
<dbReference type="SMR" id="Q9C037"/>
<dbReference type="BioGRID" id="124585">
    <property type="interactions" value="61"/>
</dbReference>
<dbReference type="FunCoup" id="Q9C037">
    <property type="interactions" value="608"/>
</dbReference>
<dbReference type="IntAct" id="Q9C037">
    <property type="interactions" value="20"/>
</dbReference>
<dbReference type="STRING" id="9606.ENSP00000348216"/>
<dbReference type="GlyGen" id="Q9C037">
    <property type="glycosylation" value="1 site, 1 O-linked glycan (1 site)"/>
</dbReference>
<dbReference type="iPTMnet" id="Q9C037"/>
<dbReference type="PhosphoSitePlus" id="Q9C037"/>
<dbReference type="SwissPalm" id="Q9C037"/>
<dbReference type="BioMuta" id="TRIM4"/>
<dbReference type="DMDM" id="209572691"/>
<dbReference type="jPOST" id="Q9C037"/>
<dbReference type="MassIVE" id="Q9C037"/>
<dbReference type="PaxDb" id="9606-ENSP00000348216"/>
<dbReference type="PeptideAtlas" id="Q9C037"/>
<dbReference type="ProteomicsDB" id="79957">
    <molecule id="Q9C037-1"/>
</dbReference>
<dbReference type="ProteomicsDB" id="79958">
    <molecule id="Q9C037-2"/>
</dbReference>
<dbReference type="ProteomicsDB" id="79959">
    <molecule id="Q9C037-3"/>
</dbReference>
<dbReference type="Pumba" id="Q9C037"/>
<dbReference type="Antibodypedia" id="16291">
    <property type="antibodies" value="210 antibodies from 26 providers"/>
</dbReference>
<dbReference type="DNASU" id="89122"/>
<dbReference type="Ensembl" id="ENST00000349062.7">
    <molecule id="Q9C037-2"/>
    <property type="protein sequence ID" value="ENSP00000275736.4"/>
    <property type="gene ID" value="ENSG00000146833.16"/>
</dbReference>
<dbReference type="Ensembl" id="ENST00000354241.5">
    <molecule id="Q9C037-3"/>
    <property type="protein sequence ID" value="ENSP00000346186.5"/>
    <property type="gene ID" value="ENSG00000146833.16"/>
</dbReference>
<dbReference type="Ensembl" id="ENST00000355947.6">
    <molecule id="Q9C037-1"/>
    <property type="protein sequence ID" value="ENSP00000348216.2"/>
    <property type="gene ID" value="ENSG00000146833.16"/>
</dbReference>
<dbReference type="GeneID" id="89122"/>
<dbReference type="KEGG" id="hsa:89122"/>
<dbReference type="MANE-Select" id="ENST00000349062.7">
    <molecule id="Q9C037-2"/>
    <property type="protein sequence ID" value="ENSP00000275736.4"/>
    <property type="RefSeq nucleotide sequence ID" value="NM_033091.3"/>
    <property type="RefSeq protein sequence ID" value="NP_149082.1"/>
</dbReference>
<dbReference type="UCSC" id="uc003usd.4">
    <molecule id="Q9C037-1"/>
    <property type="organism name" value="human"/>
</dbReference>
<dbReference type="AGR" id="HGNC:16275"/>
<dbReference type="CTD" id="89122"/>
<dbReference type="DisGeNET" id="89122"/>
<dbReference type="GeneCards" id="TRIM4"/>
<dbReference type="HGNC" id="HGNC:16275">
    <property type="gene designation" value="TRIM4"/>
</dbReference>
<dbReference type="HPA" id="ENSG00000146833">
    <property type="expression patterns" value="Low tissue specificity"/>
</dbReference>
<dbReference type="neXtProt" id="NX_Q9C037"/>
<dbReference type="OpenTargets" id="ENSG00000146833"/>
<dbReference type="PharmGKB" id="PA38108"/>
<dbReference type="VEuPathDB" id="HostDB:ENSG00000146833"/>
<dbReference type="eggNOG" id="KOG2177">
    <property type="taxonomic scope" value="Eukaryota"/>
</dbReference>
<dbReference type="GeneTree" id="ENSGT00940000163330"/>
<dbReference type="HOGENOM" id="CLU_013137_0_3_1"/>
<dbReference type="InParanoid" id="Q9C037"/>
<dbReference type="OMA" id="NAVDGEH"/>
<dbReference type="OrthoDB" id="9049620at2759"/>
<dbReference type="PAN-GO" id="Q9C037">
    <property type="GO annotations" value="5 GO annotations based on evolutionary models"/>
</dbReference>
<dbReference type="PhylomeDB" id="Q9C037"/>
<dbReference type="TreeFam" id="TF338674"/>
<dbReference type="PathwayCommons" id="Q9C037"/>
<dbReference type="Reactome" id="R-HSA-168928">
    <property type="pathway name" value="DDX58/IFIH1-mediated induction of interferon-alpha/beta"/>
</dbReference>
<dbReference type="Reactome" id="R-HSA-5689896">
    <property type="pathway name" value="Ovarian tumor domain proteases"/>
</dbReference>
<dbReference type="Reactome" id="R-HSA-918233">
    <property type="pathway name" value="TRAF3-dependent IRF activation pathway"/>
</dbReference>
<dbReference type="Reactome" id="R-HSA-933541">
    <property type="pathway name" value="TRAF6 mediated IRF7 activation"/>
</dbReference>
<dbReference type="Reactome" id="R-HSA-933542">
    <property type="pathway name" value="TRAF6 mediated NF-kB activation"/>
</dbReference>
<dbReference type="Reactome" id="R-HSA-933543">
    <property type="pathway name" value="NF-kB activation through FADD/RIP-1 pathway mediated by caspase-8 and -10"/>
</dbReference>
<dbReference type="Reactome" id="R-HSA-936440">
    <property type="pathway name" value="Negative regulators of DDX58/IFIH1 signaling"/>
</dbReference>
<dbReference type="Reactome" id="R-HSA-9705671">
    <property type="pathway name" value="SARS-CoV-2 activates/modulates innate and adaptive immune responses"/>
</dbReference>
<dbReference type="Reactome" id="R-HSA-983168">
    <property type="pathway name" value="Antigen processing: Ubiquitination &amp; Proteasome degradation"/>
</dbReference>
<dbReference type="SignaLink" id="Q9C037"/>
<dbReference type="SIGNOR" id="Q9C037"/>
<dbReference type="UniPathway" id="UPA00143"/>
<dbReference type="BioGRID-ORCS" id="89122">
    <property type="hits" value="18 hits in 1200 CRISPR screens"/>
</dbReference>
<dbReference type="ChiTaRS" id="TRIM4">
    <property type="organism name" value="human"/>
</dbReference>
<dbReference type="GenomeRNAi" id="89122"/>
<dbReference type="Pharos" id="Q9C037">
    <property type="development level" value="Tbio"/>
</dbReference>
<dbReference type="PRO" id="PR:Q9C037"/>
<dbReference type="Proteomes" id="UP000005640">
    <property type="component" value="Chromosome 7"/>
</dbReference>
<dbReference type="RNAct" id="Q9C037">
    <property type="molecule type" value="protein"/>
</dbReference>
<dbReference type="Bgee" id="ENSG00000146833">
    <property type="expression patterns" value="Expressed in buccal mucosa cell and 197 other cell types or tissues"/>
</dbReference>
<dbReference type="ExpressionAtlas" id="Q9C037">
    <property type="expression patterns" value="baseline and differential"/>
</dbReference>
<dbReference type="GO" id="GO:0005737">
    <property type="term" value="C:cytoplasm"/>
    <property type="evidence" value="ECO:0000314"/>
    <property type="project" value="UniProtKB"/>
</dbReference>
<dbReference type="GO" id="GO:0005829">
    <property type="term" value="C:cytosol"/>
    <property type="evidence" value="ECO:0000314"/>
    <property type="project" value="HPA"/>
</dbReference>
<dbReference type="GO" id="GO:0005886">
    <property type="term" value="C:plasma membrane"/>
    <property type="evidence" value="ECO:0000314"/>
    <property type="project" value="HPA"/>
</dbReference>
<dbReference type="GO" id="GO:0042802">
    <property type="term" value="F:identical protein binding"/>
    <property type="evidence" value="ECO:0000353"/>
    <property type="project" value="UniProtKB"/>
</dbReference>
<dbReference type="GO" id="GO:0061630">
    <property type="term" value="F:ubiquitin protein ligase activity"/>
    <property type="evidence" value="ECO:0000318"/>
    <property type="project" value="GO_Central"/>
</dbReference>
<dbReference type="GO" id="GO:0004842">
    <property type="term" value="F:ubiquitin-protein transferase activity"/>
    <property type="evidence" value="ECO:0000269"/>
    <property type="project" value="Reactome"/>
</dbReference>
<dbReference type="GO" id="GO:0008270">
    <property type="term" value="F:zinc ion binding"/>
    <property type="evidence" value="ECO:0007669"/>
    <property type="project" value="UniProtKB-KW"/>
</dbReference>
<dbReference type="GO" id="GO:0045087">
    <property type="term" value="P:innate immune response"/>
    <property type="evidence" value="ECO:0000318"/>
    <property type="project" value="GO_Central"/>
</dbReference>
<dbReference type="GO" id="GO:0016567">
    <property type="term" value="P:protein ubiquitination"/>
    <property type="evidence" value="ECO:0007669"/>
    <property type="project" value="UniProtKB-UniPathway"/>
</dbReference>
<dbReference type="GO" id="GO:0010468">
    <property type="term" value="P:regulation of gene expression"/>
    <property type="evidence" value="ECO:0000318"/>
    <property type="project" value="GO_Central"/>
</dbReference>
<dbReference type="CDD" id="cd19760">
    <property type="entry name" value="Bbox2_TRIM4-like"/>
    <property type="match status" value="1"/>
</dbReference>
<dbReference type="CDD" id="cd16590">
    <property type="entry name" value="RING-HC_TRIM4_C-IV"/>
    <property type="match status" value="1"/>
</dbReference>
<dbReference type="CDD" id="cd15809">
    <property type="entry name" value="SPRY_PRY_TRIM4"/>
    <property type="match status" value="1"/>
</dbReference>
<dbReference type="FunFam" id="2.60.120.920:FF:000049">
    <property type="entry name" value="Tripartite motif containing 4"/>
    <property type="match status" value="1"/>
</dbReference>
<dbReference type="Gene3D" id="2.60.120.920">
    <property type="match status" value="1"/>
</dbReference>
<dbReference type="Gene3D" id="3.30.160.60">
    <property type="entry name" value="Classic Zinc Finger"/>
    <property type="match status" value="1"/>
</dbReference>
<dbReference type="Gene3D" id="3.30.40.10">
    <property type="entry name" value="Zinc/RING finger domain, C3HC4 (zinc finger)"/>
    <property type="match status" value="1"/>
</dbReference>
<dbReference type="InterPro" id="IPR001870">
    <property type="entry name" value="B30.2/SPRY"/>
</dbReference>
<dbReference type="InterPro" id="IPR043136">
    <property type="entry name" value="B30.2/SPRY_sf"/>
</dbReference>
<dbReference type="InterPro" id="IPR003879">
    <property type="entry name" value="Butyrophylin_SPRY"/>
</dbReference>
<dbReference type="InterPro" id="IPR013320">
    <property type="entry name" value="ConA-like_dom_sf"/>
</dbReference>
<dbReference type="InterPro" id="IPR035829">
    <property type="entry name" value="PRY/SPRY_TRIM4"/>
</dbReference>
<dbReference type="InterPro" id="IPR003877">
    <property type="entry name" value="SPRY_dom"/>
</dbReference>
<dbReference type="InterPro" id="IPR050143">
    <property type="entry name" value="TRIM/RBCC"/>
</dbReference>
<dbReference type="InterPro" id="IPR000315">
    <property type="entry name" value="Znf_B-box"/>
</dbReference>
<dbReference type="InterPro" id="IPR001841">
    <property type="entry name" value="Znf_RING"/>
</dbReference>
<dbReference type="InterPro" id="IPR013083">
    <property type="entry name" value="Znf_RING/FYVE/PHD"/>
</dbReference>
<dbReference type="InterPro" id="IPR017907">
    <property type="entry name" value="Znf_RING_CS"/>
</dbReference>
<dbReference type="PANTHER" id="PTHR24103">
    <property type="entry name" value="E3 UBIQUITIN-PROTEIN LIGASE TRIM"/>
    <property type="match status" value="1"/>
</dbReference>
<dbReference type="Pfam" id="PF00622">
    <property type="entry name" value="SPRY"/>
    <property type="match status" value="1"/>
</dbReference>
<dbReference type="Pfam" id="PF00643">
    <property type="entry name" value="zf-B_box"/>
    <property type="match status" value="1"/>
</dbReference>
<dbReference type="Pfam" id="PF15227">
    <property type="entry name" value="zf-C3HC4_4"/>
    <property type="match status" value="1"/>
</dbReference>
<dbReference type="PRINTS" id="PR01407">
    <property type="entry name" value="BUTYPHLNCDUF"/>
</dbReference>
<dbReference type="SMART" id="SM00336">
    <property type="entry name" value="BBOX"/>
    <property type="match status" value="1"/>
</dbReference>
<dbReference type="SMART" id="SM00184">
    <property type="entry name" value="RING"/>
    <property type="match status" value="1"/>
</dbReference>
<dbReference type="SMART" id="SM00449">
    <property type="entry name" value="SPRY"/>
    <property type="match status" value="1"/>
</dbReference>
<dbReference type="SUPFAM" id="SSF57845">
    <property type="entry name" value="B-box zinc-binding domain"/>
    <property type="match status" value="1"/>
</dbReference>
<dbReference type="SUPFAM" id="SSF49899">
    <property type="entry name" value="Concanavalin A-like lectins/glucanases"/>
    <property type="match status" value="1"/>
</dbReference>
<dbReference type="SUPFAM" id="SSF57850">
    <property type="entry name" value="RING/U-box"/>
    <property type="match status" value="1"/>
</dbReference>
<dbReference type="PROSITE" id="PS50188">
    <property type="entry name" value="B302_SPRY"/>
    <property type="match status" value="1"/>
</dbReference>
<dbReference type="PROSITE" id="PS50119">
    <property type="entry name" value="ZF_BBOX"/>
    <property type="match status" value="1"/>
</dbReference>
<dbReference type="PROSITE" id="PS00518">
    <property type="entry name" value="ZF_RING_1"/>
    <property type="match status" value="1"/>
</dbReference>
<dbReference type="PROSITE" id="PS50089">
    <property type="entry name" value="ZF_RING_2"/>
    <property type="match status" value="1"/>
</dbReference>
<comment type="function">
    <text evidence="6">E3 ubiquitin-protein ligase. Mediates 'Lys-63'-linked polyubiquitination of the innate immune receptor RIGI, this linkage doesn't lead to proteasomal degradation but seems to enhance IFN induction.</text>
</comment>
<comment type="catalytic activity">
    <reaction>
        <text>S-ubiquitinyl-[E2 ubiquitin-conjugating enzyme]-L-cysteine + [acceptor protein]-L-lysine = [E2 ubiquitin-conjugating enzyme]-L-cysteine + N(6)-ubiquitinyl-[acceptor protein]-L-lysine.</text>
        <dbReference type="EC" id="2.3.2.27"/>
    </reaction>
</comment>
<comment type="pathway">
    <text>Protein modification; protein ubiquitination.</text>
</comment>
<comment type="subunit">
    <text evidence="5">Homotrimer.</text>
</comment>
<comment type="subcellular location">
    <subcellularLocation>
        <location evidence="5">Cytoplasm</location>
    </subcellularLocation>
</comment>
<comment type="alternative products">
    <event type="alternative splicing"/>
    <isoform>
        <id>Q9C037-1</id>
        <name>Alpha</name>
        <sequence type="displayed"/>
    </isoform>
    <isoform>
        <id>Q9C037-2</id>
        <name>Beta</name>
        <sequence type="described" ref="VSP_010197"/>
    </isoform>
    <isoform>
        <id>Q9C037-3</id>
        <name>Gamma</name>
        <sequence type="described" ref="VSP_010197 VSP_010198 VSP_010199"/>
    </isoform>
</comment>
<comment type="similarity">
    <text evidence="9">Belongs to the TRIM/RBCC family.</text>
</comment>
<proteinExistence type="evidence at protein level"/>
<sequence length="500" mass="57461">MEAEDIQEELTCPICLDYFQDPVSIECGHNFCRGCLHRNWAPGGGPFPCPECRHPSAPAALRPNWALARLTEKTQRRRLGPVPPGLCGRHWEPLRLFCEDDQRPVCLVCRESQEHQTHAMAPIDEAFESYRTGNFDIHVDEWKRRLIRLLLYHFKQEEKLLKSQRNLVAKMKKVMHLQDVEVKNATQWKDKIKSQRMRISTEFSKLHNFLVEEEDLFLQRLNKEEEETKKKLNENTLKLNQTIASLKKLILEVGEKSQAPTLELLQNPKEVLTRSEIQDVNYSLEAVKVKTVCQIPLMKEMLKRFQVAVNLAEDTAHPKLVFSQEGRYVKNTASASSWPVFSSAWNYFAGWRNPQKTAFVERFQHLPCVLGKNVFTSGKHYWEVESRDSLEVAVGVCREDVMGITDRSKMSPDVGIWAIYWSAAGYWPLIGFPGTPTQQEPALHRVGVYLDRGTGNVSFYSAVDGVHLHTFSCSSVSRLRPFFWLSPLASLVIPPVTDRK</sequence>
<keyword id="KW-0025">Alternative splicing</keyword>
<keyword id="KW-0175">Coiled coil</keyword>
<keyword id="KW-0963">Cytoplasm</keyword>
<keyword id="KW-0391">Immunity</keyword>
<keyword id="KW-0399">Innate immunity</keyword>
<keyword id="KW-0479">Metal-binding</keyword>
<keyword id="KW-1267">Proteomics identification</keyword>
<keyword id="KW-1185">Reference proteome</keyword>
<keyword id="KW-0808">Transferase</keyword>
<keyword id="KW-0833">Ubl conjugation pathway</keyword>
<keyword id="KW-0862">Zinc</keyword>
<keyword id="KW-0863">Zinc-finger</keyword>
<organism>
    <name type="scientific">Homo sapiens</name>
    <name type="common">Human</name>
    <dbReference type="NCBI Taxonomy" id="9606"/>
    <lineage>
        <taxon>Eukaryota</taxon>
        <taxon>Metazoa</taxon>
        <taxon>Chordata</taxon>
        <taxon>Craniata</taxon>
        <taxon>Vertebrata</taxon>
        <taxon>Euteleostomi</taxon>
        <taxon>Mammalia</taxon>
        <taxon>Eutheria</taxon>
        <taxon>Euarchontoglires</taxon>
        <taxon>Primates</taxon>
        <taxon>Haplorrhini</taxon>
        <taxon>Catarrhini</taxon>
        <taxon>Hominidae</taxon>
        <taxon>Homo</taxon>
    </lineage>
</organism>
<protein>
    <recommendedName>
        <fullName>E3 ubiquitin-protein ligase TRIM4</fullName>
        <ecNumber>2.3.2.27</ecNumber>
    </recommendedName>
    <alternativeName>
        <fullName>RING finger protein 87</fullName>
    </alternativeName>
    <alternativeName>
        <fullName evidence="9">RING-type E3 ubiquitin transferase TRIM4</fullName>
    </alternativeName>
    <alternativeName>
        <fullName>Tripartite motif-containing protein 4</fullName>
    </alternativeName>
</protein>
<accession>Q9C037</accession>
<accession>A4D298</accession>
<accession>Q75MK1</accession>
<accession>Q96F06</accession>
<accession>Q9C036</accession>
<gene>
    <name type="primary">TRIM4</name>
    <name type="synonym">RNF87</name>
</gene>
<reference key="1">
    <citation type="journal article" date="2001" name="EMBO J.">
        <title>The tripartite motif family identifies cell compartments.</title>
        <authorList>
            <person name="Reymond A."/>
            <person name="Meroni G."/>
            <person name="Fantozzi A."/>
            <person name="Merla G."/>
            <person name="Cairo S."/>
            <person name="Luzi L."/>
            <person name="Riganelli D."/>
            <person name="Zanaria E."/>
            <person name="Messali S."/>
            <person name="Cainarca S."/>
            <person name="Guffanti A."/>
            <person name="Minucci S."/>
            <person name="Pelicci P.G."/>
            <person name="Ballabio A."/>
        </authorList>
    </citation>
    <scope>NUCLEOTIDE SEQUENCE [MRNA] (ISOFORMS ALPHA AND BETA)</scope>
</reference>
<reference key="2">
    <citation type="journal article" date="2003" name="Nature">
        <title>The DNA sequence of human chromosome 7.</title>
        <authorList>
            <person name="Hillier L.W."/>
            <person name="Fulton R.S."/>
            <person name="Fulton L.A."/>
            <person name="Graves T.A."/>
            <person name="Pepin K.H."/>
            <person name="Wagner-McPherson C."/>
            <person name="Layman D."/>
            <person name="Maas J."/>
            <person name="Jaeger S."/>
            <person name="Walker R."/>
            <person name="Wylie K."/>
            <person name="Sekhon M."/>
            <person name="Becker M.C."/>
            <person name="O'Laughlin M.D."/>
            <person name="Schaller M.E."/>
            <person name="Fewell G.A."/>
            <person name="Delehaunty K.D."/>
            <person name="Miner T.L."/>
            <person name="Nash W.E."/>
            <person name="Cordes M."/>
            <person name="Du H."/>
            <person name="Sun H."/>
            <person name="Edwards J."/>
            <person name="Bradshaw-Cordum H."/>
            <person name="Ali J."/>
            <person name="Andrews S."/>
            <person name="Isak A."/>
            <person name="Vanbrunt A."/>
            <person name="Nguyen C."/>
            <person name="Du F."/>
            <person name="Lamar B."/>
            <person name="Courtney L."/>
            <person name="Kalicki J."/>
            <person name="Ozersky P."/>
            <person name="Bielicki L."/>
            <person name="Scott K."/>
            <person name="Holmes A."/>
            <person name="Harkins R."/>
            <person name="Harris A."/>
            <person name="Strong C.M."/>
            <person name="Hou S."/>
            <person name="Tomlinson C."/>
            <person name="Dauphin-Kohlberg S."/>
            <person name="Kozlowicz-Reilly A."/>
            <person name="Leonard S."/>
            <person name="Rohlfing T."/>
            <person name="Rock S.M."/>
            <person name="Tin-Wollam A.-M."/>
            <person name="Abbott A."/>
            <person name="Minx P."/>
            <person name="Maupin R."/>
            <person name="Strowmatt C."/>
            <person name="Latreille P."/>
            <person name="Miller N."/>
            <person name="Johnson D."/>
            <person name="Murray J."/>
            <person name="Woessner J.P."/>
            <person name="Wendl M.C."/>
            <person name="Yang S.-P."/>
            <person name="Schultz B.R."/>
            <person name="Wallis J.W."/>
            <person name="Spieth J."/>
            <person name="Bieri T.A."/>
            <person name="Nelson J.O."/>
            <person name="Berkowicz N."/>
            <person name="Wohldmann P.E."/>
            <person name="Cook L.L."/>
            <person name="Hickenbotham M.T."/>
            <person name="Eldred J."/>
            <person name="Williams D."/>
            <person name="Bedell J.A."/>
            <person name="Mardis E.R."/>
            <person name="Clifton S.W."/>
            <person name="Chissoe S.L."/>
            <person name="Marra M.A."/>
            <person name="Raymond C."/>
            <person name="Haugen E."/>
            <person name="Gillett W."/>
            <person name="Zhou Y."/>
            <person name="James R."/>
            <person name="Phelps K."/>
            <person name="Iadanoto S."/>
            <person name="Bubb K."/>
            <person name="Simms E."/>
            <person name="Levy R."/>
            <person name="Clendenning J."/>
            <person name="Kaul R."/>
            <person name="Kent W.J."/>
            <person name="Furey T.S."/>
            <person name="Baertsch R.A."/>
            <person name="Brent M.R."/>
            <person name="Keibler E."/>
            <person name="Flicek P."/>
            <person name="Bork P."/>
            <person name="Suyama M."/>
            <person name="Bailey J.A."/>
            <person name="Portnoy M.E."/>
            <person name="Torrents D."/>
            <person name="Chinwalla A.T."/>
            <person name="Gish W.R."/>
            <person name="Eddy S.R."/>
            <person name="McPherson J.D."/>
            <person name="Olson M.V."/>
            <person name="Eichler E.E."/>
            <person name="Green E.D."/>
            <person name="Waterston R.H."/>
            <person name="Wilson R.K."/>
        </authorList>
    </citation>
    <scope>NUCLEOTIDE SEQUENCE [LARGE SCALE GENOMIC DNA]</scope>
</reference>
<reference key="3">
    <citation type="journal article" date="2003" name="Science">
        <title>Human chromosome 7: DNA sequence and biology.</title>
        <authorList>
            <person name="Scherer S.W."/>
            <person name="Cheung J."/>
            <person name="MacDonald J.R."/>
            <person name="Osborne L.R."/>
            <person name="Nakabayashi K."/>
            <person name="Herbrick J.-A."/>
            <person name="Carson A.R."/>
            <person name="Parker-Katiraee L."/>
            <person name="Skaug J."/>
            <person name="Khaja R."/>
            <person name="Zhang J."/>
            <person name="Hudek A.K."/>
            <person name="Li M."/>
            <person name="Haddad M."/>
            <person name="Duggan G.E."/>
            <person name="Fernandez B.A."/>
            <person name="Kanematsu E."/>
            <person name="Gentles S."/>
            <person name="Christopoulos C.C."/>
            <person name="Choufani S."/>
            <person name="Kwasnicka D."/>
            <person name="Zheng X.H."/>
            <person name="Lai Z."/>
            <person name="Nusskern D.R."/>
            <person name="Zhang Q."/>
            <person name="Gu Z."/>
            <person name="Lu F."/>
            <person name="Zeesman S."/>
            <person name="Nowaczyk M.J."/>
            <person name="Teshima I."/>
            <person name="Chitayat D."/>
            <person name="Shuman C."/>
            <person name="Weksberg R."/>
            <person name="Zackai E.H."/>
            <person name="Grebe T.A."/>
            <person name="Cox S.R."/>
            <person name="Kirkpatrick S.J."/>
            <person name="Rahman N."/>
            <person name="Friedman J.M."/>
            <person name="Heng H.H.Q."/>
            <person name="Pelicci P.G."/>
            <person name="Lo-Coco F."/>
            <person name="Belloni E."/>
            <person name="Shaffer L.G."/>
            <person name="Pober B."/>
            <person name="Morton C.C."/>
            <person name="Gusella J.F."/>
            <person name="Bruns G.A.P."/>
            <person name="Korf B.R."/>
            <person name="Quade B.J."/>
            <person name="Ligon A.H."/>
            <person name="Ferguson H."/>
            <person name="Higgins A.W."/>
            <person name="Leach N.T."/>
            <person name="Herrick S.R."/>
            <person name="Lemyre E."/>
            <person name="Farra C.G."/>
            <person name="Kim H.-G."/>
            <person name="Summers A.M."/>
            <person name="Gripp K.W."/>
            <person name="Roberts W."/>
            <person name="Szatmari P."/>
            <person name="Winsor E.J.T."/>
            <person name="Grzeschik K.-H."/>
            <person name="Teebi A."/>
            <person name="Minassian B.A."/>
            <person name="Kere J."/>
            <person name="Armengol L."/>
            <person name="Pujana M.A."/>
            <person name="Estivill X."/>
            <person name="Wilson M.D."/>
            <person name="Koop B.F."/>
            <person name="Tosi S."/>
            <person name="Moore G.E."/>
            <person name="Boright A.P."/>
            <person name="Zlotorynski E."/>
            <person name="Kerem B."/>
            <person name="Kroisel P.M."/>
            <person name="Petek E."/>
            <person name="Oscier D.G."/>
            <person name="Mould S.J."/>
            <person name="Doehner H."/>
            <person name="Doehner K."/>
            <person name="Rommens J.M."/>
            <person name="Vincent J.B."/>
            <person name="Venter J.C."/>
            <person name="Li P.W."/>
            <person name="Mural R.J."/>
            <person name="Adams M.D."/>
            <person name="Tsui L.-C."/>
        </authorList>
    </citation>
    <scope>NUCLEOTIDE SEQUENCE [LARGE SCALE GENOMIC DNA]</scope>
</reference>
<reference key="4">
    <citation type="submission" date="2005-09" db="EMBL/GenBank/DDBJ databases">
        <authorList>
            <person name="Mural R.J."/>
            <person name="Istrail S."/>
            <person name="Sutton G.G."/>
            <person name="Florea L."/>
            <person name="Halpern A.L."/>
            <person name="Mobarry C.M."/>
            <person name="Lippert R."/>
            <person name="Walenz B."/>
            <person name="Shatkay H."/>
            <person name="Dew I."/>
            <person name="Miller J.R."/>
            <person name="Flanigan M.J."/>
            <person name="Edwards N.J."/>
            <person name="Bolanos R."/>
            <person name="Fasulo D."/>
            <person name="Halldorsson B.V."/>
            <person name="Hannenhalli S."/>
            <person name="Turner R."/>
            <person name="Yooseph S."/>
            <person name="Lu F."/>
            <person name="Nusskern D.R."/>
            <person name="Shue B.C."/>
            <person name="Zheng X.H."/>
            <person name="Zhong F."/>
            <person name="Delcher A.L."/>
            <person name="Huson D.H."/>
            <person name="Kravitz S.A."/>
            <person name="Mouchard L."/>
            <person name="Reinert K."/>
            <person name="Remington K.A."/>
            <person name="Clark A.G."/>
            <person name="Waterman M.S."/>
            <person name="Eichler E.E."/>
            <person name="Adams M.D."/>
            <person name="Hunkapiller M.W."/>
            <person name="Myers E.W."/>
            <person name="Venter J.C."/>
        </authorList>
    </citation>
    <scope>NUCLEOTIDE SEQUENCE [LARGE SCALE GENOMIC DNA]</scope>
</reference>
<reference key="5">
    <citation type="journal article" date="2004" name="Genome Res.">
        <title>The status, quality, and expansion of the NIH full-length cDNA project: the Mammalian Gene Collection (MGC).</title>
        <authorList>
            <consortium name="The MGC Project Team"/>
        </authorList>
    </citation>
    <scope>NUCLEOTIDE SEQUENCE [LARGE SCALE MRNA] (ISOFORM GAMMA)</scope>
    <source>
        <tissue>Melanoma</tissue>
    </source>
</reference>
<reference key="6">
    <citation type="journal article" date="2007" name="Virology">
        <title>Unique features of TRIM5alpha among closely related human TRIM family members.</title>
        <authorList>
            <person name="Li X."/>
            <person name="Gold B."/>
            <person name="O'hUigin C."/>
            <person name="Diaz-Griffero F."/>
            <person name="Song B."/>
            <person name="Si Z."/>
            <person name="Li Y."/>
            <person name="Yuan W."/>
            <person name="Stremlau M."/>
            <person name="Mische C."/>
            <person name="Javanbakht H."/>
            <person name="Scally M."/>
            <person name="Winkler C."/>
            <person name="Dean M."/>
            <person name="Sodroski J."/>
        </authorList>
    </citation>
    <scope>SUBUNIT</scope>
    <scope>SUBCELLULAR LOCATION</scope>
</reference>
<reference key="7">
    <citation type="journal article" date="2014" name="J. Mol. Cell Biol.">
        <title>TRIM4 modulates type I interferon induction and cellular antiviral response by targeting RIG-I for K63-linked ubiquitination.</title>
        <authorList>
            <person name="Yan J."/>
            <person name="Li Q."/>
            <person name="Mao A.P."/>
            <person name="Hu M.M."/>
            <person name="Shu H.B."/>
        </authorList>
    </citation>
    <scope>FUNCTION</scope>
    <scope>PATHWAY</scope>
    <scope>MUTAGENESIS OF CYS-27</scope>
</reference>
<reference key="8">
    <citation type="journal article" date="2015" name="Proteomics">
        <title>N-terminome analysis of the human mitochondrial proteome.</title>
        <authorList>
            <person name="Vaca Jacome A.S."/>
            <person name="Rabilloud T."/>
            <person name="Schaeffer-Reiss C."/>
            <person name="Rompais M."/>
            <person name="Ayoub D."/>
            <person name="Lane L."/>
            <person name="Bairoch A."/>
            <person name="Van Dorsselaer A."/>
            <person name="Carapito C."/>
        </authorList>
    </citation>
    <scope>IDENTIFICATION BY MASS SPECTROMETRY [LARGE SCALE ANALYSIS]</scope>
</reference>
<name>TRIM4_HUMAN</name>
<evidence type="ECO:0000255" key="1"/>
<evidence type="ECO:0000255" key="2">
    <source>
        <dbReference type="PROSITE-ProRule" id="PRU00024"/>
    </source>
</evidence>
<evidence type="ECO:0000255" key="3">
    <source>
        <dbReference type="PROSITE-ProRule" id="PRU00175"/>
    </source>
</evidence>
<evidence type="ECO:0000255" key="4">
    <source>
        <dbReference type="PROSITE-ProRule" id="PRU00548"/>
    </source>
</evidence>
<evidence type="ECO:0000269" key="5">
    <source>
    </source>
</evidence>
<evidence type="ECO:0000269" key="6">
    <source>
    </source>
</evidence>
<evidence type="ECO:0000303" key="7">
    <source>
    </source>
</evidence>
<evidence type="ECO:0000303" key="8">
    <source>
    </source>
</evidence>
<evidence type="ECO:0000305" key="9"/>